<protein>
    <recommendedName>
        <fullName evidence="1">Pyridoxine 5'-phosphate synthase</fullName>
        <shortName evidence="1">PNP synthase</shortName>
        <ecNumber evidence="1">2.6.99.2</ecNumber>
    </recommendedName>
</protein>
<comment type="function">
    <text evidence="1">Catalyzes the complicated ring closure reaction between the two acyclic compounds 1-deoxy-D-xylulose-5-phosphate (DXP) and 3-amino-2-oxopropyl phosphate (1-amino-acetone-3-phosphate or AAP) to form pyridoxine 5'-phosphate (PNP) and inorganic phosphate.</text>
</comment>
<comment type="catalytic activity">
    <reaction evidence="1">
        <text>3-amino-2-oxopropyl phosphate + 1-deoxy-D-xylulose 5-phosphate = pyridoxine 5'-phosphate + phosphate + 2 H2O + H(+)</text>
        <dbReference type="Rhea" id="RHEA:15265"/>
        <dbReference type="ChEBI" id="CHEBI:15377"/>
        <dbReference type="ChEBI" id="CHEBI:15378"/>
        <dbReference type="ChEBI" id="CHEBI:43474"/>
        <dbReference type="ChEBI" id="CHEBI:57279"/>
        <dbReference type="ChEBI" id="CHEBI:57792"/>
        <dbReference type="ChEBI" id="CHEBI:58589"/>
        <dbReference type="EC" id="2.6.99.2"/>
    </reaction>
</comment>
<comment type="pathway">
    <text evidence="1">Cofactor biosynthesis; pyridoxine 5'-phosphate biosynthesis; pyridoxine 5'-phosphate from D-erythrose 4-phosphate: step 5/5.</text>
</comment>
<comment type="subunit">
    <text evidence="1">Homooctamer; tetramer of dimers.</text>
</comment>
<comment type="subcellular location">
    <subcellularLocation>
        <location evidence="1">Cytoplasm</location>
    </subcellularLocation>
</comment>
<comment type="similarity">
    <text evidence="1">Belongs to the PNP synthase family.</text>
</comment>
<proteinExistence type="inferred from homology"/>
<evidence type="ECO:0000255" key="1">
    <source>
        <dbReference type="HAMAP-Rule" id="MF_00279"/>
    </source>
</evidence>
<name>PDXJ_PROA2</name>
<dbReference type="EC" id="2.6.99.2" evidence="1"/>
<dbReference type="EMBL" id="CP001108">
    <property type="protein sequence ID" value="ACF46708.1"/>
    <property type="molecule type" value="Genomic_DNA"/>
</dbReference>
<dbReference type="RefSeq" id="WP_012506241.1">
    <property type="nucleotide sequence ID" value="NC_011059.1"/>
</dbReference>
<dbReference type="SMR" id="B4S3G9"/>
<dbReference type="STRING" id="290512.Paes_1690"/>
<dbReference type="KEGG" id="paa:Paes_1690"/>
<dbReference type="eggNOG" id="COG0854">
    <property type="taxonomic scope" value="Bacteria"/>
</dbReference>
<dbReference type="HOGENOM" id="CLU_074563_0_0_10"/>
<dbReference type="UniPathway" id="UPA00244">
    <property type="reaction ID" value="UER00313"/>
</dbReference>
<dbReference type="Proteomes" id="UP000002725">
    <property type="component" value="Chromosome"/>
</dbReference>
<dbReference type="GO" id="GO:0005829">
    <property type="term" value="C:cytosol"/>
    <property type="evidence" value="ECO:0007669"/>
    <property type="project" value="TreeGrafter"/>
</dbReference>
<dbReference type="GO" id="GO:0033856">
    <property type="term" value="F:pyridoxine 5'-phosphate synthase activity"/>
    <property type="evidence" value="ECO:0007669"/>
    <property type="project" value="UniProtKB-EC"/>
</dbReference>
<dbReference type="GO" id="GO:0008615">
    <property type="term" value="P:pyridoxine biosynthetic process"/>
    <property type="evidence" value="ECO:0007669"/>
    <property type="project" value="UniProtKB-UniRule"/>
</dbReference>
<dbReference type="CDD" id="cd00003">
    <property type="entry name" value="PNPsynthase"/>
    <property type="match status" value="1"/>
</dbReference>
<dbReference type="Gene3D" id="3.20.20.70">
    <property type="entry name" value="Aldolase class I"/>
    <property type="match status" value="1"/>
</dbReference>
<dbReference type="HAMAP" id="MF_00279">
    <property type="entry name" value="PdxJ"/>
    <property type="match status" value="1"/>
</dbReference>
<dbReference type="InterPro" id="IPR013785">
    <property type="entry name" value="Aldolase_TIM"/>
</dbReference>
<dbReference type="InterPro" id="IPR004569">
    <property type="entry name" value="PyrdxlP_synth_PdxJ"/>
</dbReference>
<dbReference type="InterPro" id="IPR036130">
    <property type="entry name" value="Pyridoxine-5'_phos_synth"/>
</dbReference>
<dbReference type="NCBIfam" id="TIGR00559">
    <property type="entry name" value="pdxJ"/>
    <property type="match status" value="1"/>
</dbReference>
<dbReference type="NCBIfam" id="NF003625">
    <property type="entry name" value="PRK05265.1-3"/>
    <property type="match status" value="1"/>
</dbReference>
<dbReference type="NCBIfam" id="NF003627">
    <property type="entry name" value="PRK05265.1-5"/>
    <property type="match status" value="1"/>
</dbReference>
<dbReference type="PANTHER" id="PTHR30456">
    <property type="entry name" value="PYRIDOXINE 5'-PHOSPHATE SYNTHASE"/>
    <property type="match status" value="1"/>
</dbReference>
<dbReference type="PANTHER" id="PTHR30456:SF0">
    <property type="entry name" value="PYRIDOXINE 5'-PHOSPHATE SYNTHASE"/>
    <property type="match status" value="1"/>
</dbReference>
<dbReference type="Pfam" id="PF03740">
    <property type="entry name" value="PdxJ"/>
    <property type="match status" value="1"/>
</dbReference>
<dbReference type="SUPFAM" id="SSF63892">
    <property type="entry name" value="Pyridoxine 5'-phosphate synthase"/>
    <property type="match status" value="1"/>
</dbReference>
<accession>B4S3G9</accession>
<sequence>MRLAVNVDHIATLRNARNASLPDPVTAAVIAELNGASGIVCHLREDRRHIKDRDLERLREAVTTRLDLEMAMTTEMQHIAIRTKPELITLVPEKREELTTEGGFDIIRHYDTLCRYIKPVQDAGIEVSIFIEPEEEAIERAASAGAEIVELHTGPYSLKKTPAELETELMRIRKAATFARSRGLRVVAGHGLDYFNIVPFRTIEEIEEVSIGHALIARAALVGMETAVRDMLRIIN</sequence>
<gene>
    <name evidence="1" type="primary">pdxJ</name>
    <name type="ordered locus">Paes_1690</name>
</gene>
<reference key="1">
    <citation type="submission" date="2008-06" db="EMBL/GenBank/DDBJ databases">
        <title>Complete sequence of chromosome of Prosthecochloris aestuarii DSM 271.</title>
        <authorList>
            <consortium name="US DOE Joint Genome Institute"/>
            <person name="Lucas S."/>
            <person name="Copeland A."/>
            <person name="Lapidus A."/>
            <person name="Glavina del Rio T."/>
            <person name="Dalin E."/>
            <person name="Tice H."/>
            <person name="Bruce D."/>
            <person name="Goodwin L."/>
            <person name="Pitluck S."/>
            <person name="Schmutz J."/>
            <person name="Larimer F."/>
            <person name="Land M."/>
            <person name="Hauser L."/>
            <person name="Kyrpides N."/>
            <person name="Anderson I."/>
            <person name="Liu Z."/>
            <person name="Li T."/>
            <person name="Zhao F."/>
            <person name="Overmann J."/>
            <person name="Bryant D.A."/>
            <person name="Richardson P."/>
        </authorList>
    </citation>
    <scope>NUCLEOTIDE SEQUENCE [LARGE SCALE GENOMIC DNA]</scope>
    <source>
        <strain>DSM 271 / SK 413</strain>
    </source>
</reference>
<feature type="chain" id="PRO_1000114821" description="Pyridoxine 5'-phosphate synthase">
    <location>
        <begin position="1"/>
        <end position="236"/>
    </location>
</feature>
<feature type="active site" description="Proton acceptor" evidence="1">
    <location>
        <position position="42"/>
    </location>
</feature>
<feature type="active site" description="Proton acceptor" evidence="1">
    <location>
        <position position="69"/>
    </location>
</feature>
<feature type="active site" description="Proton donor" evidence="1">
    <location>
        <position position="190"/>
    </location>
</feature>
<feature type="binding site" evidence="1">
    <location>
        <position position="6"/>
    </location>
    <ligand>
        <name>3-amino-2-oxopropyl phosphate</name>
        <dbReference type="ChEBI" id="CHEBI:57279"/>
    </ligand>
</feature>
<feature type="binding site" evidence="1">
    <location>
        <begin position="8"/>
        <end position="9"/>
    </location>
    <ligand>
        <name>1-deoxy-D-xylulose 5-phosphate</name>
        <dbReference type="ChEBI" id="CHEBI:57792"/>
    </ligand>
</feature>
<feature type="binding site" evidence="1">
    <location>
        <position position="17"/>
    </location>
    <ligand>
        <name>3-amino-2-oxopropyl phosphate</name>
        <dbReference type="ChEBI" id="CHEBI:57279"/>
    </ligand>
</feature>
<feature type="binding site" evidence="1">
    <location>
        <position position="44"/>
    </location>
    <ligand>
        <name>1-deoxy-D-xylulose 5-phosphate</name>
        <dbReference type="ChEBI" id="CHEBI:57792"/>
    </ligand>
</feature>
<feature type="binding site" evidence="1">
    <location>
        <position position="49"/>
    </location>
    <ligand>
        <name>1-deoxy-D-xylulose 5-phosphate</name>
        <dbReference type="ChEBI" id="CHEBI:57792"/>
    </ligand>
</feature>
<feature type="binding site" evidence="1">
    <location>
        <position position="99"/>
    </location>
    <ligand>
        <name>1-deoxy-D-xylulose 5-phosphate</name>
        <dbReference type="ChEBI" id="CHEBI:57792"/>
    </ligand>
</feature>
<feature type="binding site" evidence="1">
    <location>
        <position position="191"/>
    </location>
    <ligand>
        <name>3-amino-2-oxopropyl phosphate</name>
        <dbReference type="ChEBI" id="CHEBI:57279"/>
    </ligand>
</feature>
<feature type="binding site" evidence="1">
    <location>
        <begin position="212"/>
        <end position="213"/>
    </location>
    <ligand>
        <name>3-amino-2-oxopropyl phosphate</name>
        <dbReference type="ChEBI" id="CHEBI:57279"/>
    </ligand>
</feature>
<feature type="site" description="Transition state stabilizer" evidence="1">
    <location>
        <position position="150"/>
    </location>
</feature>
<organism>
    <name type="scientific">Prosthecochloris aestuarii (strain DSM 271 / SK 413)</name>
    <dbReference type="NCBI Taxonomy" id="290512"/>
    <lineage>
        <taxon>Bacteria</taxon>
        <taxon>Pseudomonadati</taxon>
        <taxon>Chlorobiota</taxon>
        <taxon>Chlorobiia</taxon>
        <taxon>Chlorobiales</taxon>
        <taxon>Chlorobiaceae</taxon>
        <taxon>Prosthecochloris</taxon>
    </lineage>
</organism>
<keyword id="KW-0963">Cytoplasm</keyword>
<keyword id="KW-0664">Pyridoxine biosynthesis</keyword>
<keyword id="KW-0808">Transferase</keyword>